<sequence length="346" mass="37317">MVSEAPPFWWTKADWRAYALWPFAWAYGRVAAIRMDRARRAMPPVPLICVGNFTVGGAGKTPTAIALAQAAKARGLKPGFLSRGYGGSLDVTTVVDPGHHRARDVGDEPLLLAREALTVVCRRRVDGARRLAAEGADIIIMDDGFQSARLTFDFALLVIDSMRGIGNGHLVPSGPVRAPIADQLRHATALLKIGHGPAADRLIRRAARAGKAIYVADTVRLDDGSMSGVKVLAWAGIADPEKFYRTVRDAGAIVEETRSFPDHHHFSDDEIADLIDRAASQGYTLVTTAKDMVRLEPGHGRAAELAAKSRVIEIEVRFDDPLAPAKIIDATLAAARARKLRANGKG</sequence>
<feature type="chain" id="PRO_1000134749" description="Tetraacyldisaccharide 4'-kinase">
    <location>
        <begin position="1"/>
        <end position="346"/>
    </location>
</feature>
<feature type="binding site" evidence="1">
    <location>
        <begin position="54"/>
        <end position="61"/>
    </location>
    <ligand>
        <name>ATP</name>
        <dbReference type="ChEBI" id="CHEBI:30616"/>
    </ligand>
</feature>
<comment type="function">
    <text evidence="1">Transfers the gamma-phosphate of ATP to the 4'-position of a tetraacyldisaccharide 1-phosphate intermediate (termed DS-1-P) to form tetraacyldisaccharide 1,4'-bis-phosphate (lipid IVA).</text>
</comment>
<comment type="catalytic activity">
    <reaction evidence="1">
        <text>a lipid A disaccharide + ATP = a lipid IVA + ADP + H(+)</text>
        <dbReference type="Rhea" id="RHEA:67840"/>
        <dbReference type="ChEBI" id="CHEBI:15378"/>
        <dbReference type="ChEBI" id="CHEBI:30616"/>
        <dbReference type="ChEBI" id="CHEBI:176343"/>
        <dbReference type="ChEBI" id="CHEBI:176425"/>
        <dbReference type="ChEBI" id="CHEBI:456216"/>
        <dbReference type="EC" id="2.7.1.130"/>
    </reaction>
</comment>
<comment type="pathway">
    <text evidence="1">Glycolipid biosynthesis; lipid IV(A) biosynthesis; lipid IV(A) from (3R)-3-hydroxytetradecanoyl-[acyl-carrier-protein] and UDP-N-acetyl-alpha-D-glucosamine: step 6/6.</text>
</comment>
<comment type="similarity">
    <text evidence="1">Belongs to the LpxK family.</text>
</comment>
<evidence type="ECO:0000255" key="1">
    <source>
        <dbReference type="HAMAP-Rule" id="MF_00409"/>
    </source>
</evidence>
<dbReference type="EC" id="2.7.1.130" evidence="1"/>
<dbReference type="EMBL" id="CP001389">
    <property type="protein sequence ID" value="ACP24223.1"/>
    <property type="molecule type" value="Genomic_DNA"/>
</dbReference>
<dbReference type="RefSeq" id="WP_012707008.1">
    <property type="nucleotide sequence ID" value="NC_012587.1"/>
</dbReference>
<dbReference type="RefSeq" id="YP_002824976.1">
    <property type="nucleotide sequence ID" value="NC_012587.1"/>
</dbReference>
<dbReference type="SMR" id="C3MGV8"/>
<dbReference type="STRING" id="394.NGR_c04270"/>
<dbReference type="KEGG" id="rhi:NGR_c04270"/>
<dbReference type="PATRIC" id="fig|394.7.peg.3233"/>
<dbReference type="eggNOG" id="COG1663">
    <property type="taxonomic scope" value="Bacteria"/>
</dbReference>
<dbReference type="HOGENOM" id="CLU_038816_0_0_5"/>
<dbReference type="OrthoDB" id="9766423at2"/>
<dbReference type="UniPathway" id="UPA00359">
    <property type="reaction ID" value="UER00482"/>
</dbReference>
<dbReference type="Proteomes" id="UP000001054">
    <property type="component" value="Chromosome"/>
</dbReference>
<dbReference type="GO" id="GO:0005886">
    <property type="term" value="C:plasma membrane"/>
    <property type="evidence" value="ECO:0007669"/>
    <property type="project" value="TreeGrafter"/>
</dbReference>
<dbReference type="GO" id="GO:0005524">
    <property type="term" value="F:ATP binding"/>
    <property type="evidence" value="ECO:0007669"/>
    <property type="project" value="UniProtKB-UniRule"/>
</dbReference>
<dbReference type="GO" id="GO:0009029">
    <property type="term" value="F:tetraacyldisaccharide 4'-kinase activity"/>
    <property type="evidence" value="ECO:0007669"/>
    <property type="project" value="UniProtKB-UniRule"/>
</dbReference>
<dbReference type="GO" id="GO:0009245">
    <property type="term" value="P:lipid A biosynthetic process"/>
    <property type="evidence" value="ECO:0007669"/>
    <property type="project" value="UniProtKB-UniRule"/>
</dbReference>
<dbReference type="GO" id="GO:0009244">
    <property type="term" value="P:lipopolysaccharide core region biosynthetic process"/>
    <property type="evidence" value="ECO:0007669"/>
    <property type="project" value="TreeGrafter"/>
</dbReference>
<dbReference type="HAMAP" id="MF_00409">
    <property type="entry name" value="LpxK"/>
    <property type="match status" value="1"/>
</dbReference>
<dbReference type="InterPro" id="IPR003758">
    <property type="entry name" value="LpxK"/>
</dbReference>
<dbReference type="InterPro" id="IPR027417">
    <property type="entry name" value="P-loop_NTPase"/>
</dbReference>
<dbReference type="NCBIfam" id="TIGR00682">
    <property type="entry name" value="lpxK"/>
    <property type="match status" value="1"/>
</dbReference>
<dbReference type="PANTHER" id="PTHR42724">
    <property type="entry name" value="TETRAACYLDISACCHARIDE 4'-KINASE"/>
    <property type="match status" value="1"/>
</dbReference>
<dbReference type="PANTHER" id="PTHR42724:SF1">
    <property type="entry name" value="TETRAACYLDISACCHARIDE 4'-KINASE, MITOCHONDRIAL-RELATED"/>
    <property type="match status" value="1"/>
</dbReference>
<dbReference type="Pfam" id="PF02606">
    <property type="entry name" value="LpxK"/>
    <property type="match status" value="1"/>
</dbReference>
<dbReference type="SUPFAM" id="SSF52540">
    <property type="entry name" value="P-loop containing nucleoside triphosphate hydrolases"/>
    <property type="match status" value="1"/>
</dbReference>
<organism>
    <name type="scientific">Sinorhizobium fredii (strain NBRC 101917 / NGR234)</name>
    <dbReference type="NCBI Taxonomy" id="394"/>
    <lineage>
        <taxon>Bacteria</taxon>
        <taxon>Pseudomonadati</taxon>
        <taxon>Pseudomonadota</taxon>
        <taxon>Alphaproteobacteria</taxon>
        <taxon>Hyphomicrobiales</taxon>
        <taxon>Rhizobiaceae</taxon>
        <taxon>Sinorhizobium/Ensifer group</taxon>
        <taxon>Sinorhizobium</taxon>
    </lineage>
</organism>
<proteinExistence type="inferred from homology"/>
<name>LPXK_SINFN</name>
<accession>C3MGV8</accession>
<gene>
    <name evidence="1" type="primary">lpxK</name>
    <name type="ordered locus">NGR_c04270</name>
</gene>
<protein>
    <recommendedName>
        <fullName evidence="1">Tetraacyldisaccharide 4'-kinase</fullName>
        <ecNumber evidence="1">2.7.1.130</ecNumber>
    </recommendedName>
    <alternativeName>
        <fullName evidence="1">Lipid A 4'-kinase</fullName>
    </alternativeName>
</protein>
<keyword id="KW-0067">ATP-binding</keyword>
<keyword id="KW-0418">Kinase</keyword>
<keyword id="KW-0441">Lipid A biosynthesis</keyword>
<keyword id="KW-0444">Lipid biosynthesis</keyword>
<keyword id="KW-0443">Lipid metabolism</keyword>
<keyword id="KW-0547">Nucleotide-binding</keyword>
<keyword id="KW-1185">Reference proteome</keyword>
<keyword id="KW-0808">Transferase</keyword>
<reference key="1">
    <citation type="journal article" date="2009" name="Appl. Environ. Microbiol.">
        <title>Rhizobium sp. strain NGR234 possesses a remarkable number of secretion systems.</title>
        <authorList>
            <person name="Schmeisser C."/>
            <person name="Liesegang H."/>
            <person name="Krysciak D."/>
            <person name="Bakkou N."/>
            <person name="Le Quere A."/>
            <person name="Wollherr A."/>
            <person name="Heinemeyer I."/>
            <person name="Morgenstern B."/>
            <person name="Pommerening-Roeser A."/>
            <person name="Flores M."/>
            <person name="Palacios R."/>
            <person name="Brenner S."/>
            <person name="Gottschalk G."/>
            <person name="Schmitz R.A."/>
            <person name="Broughton W.J."/>
            <person name="Perret X."/>
            <person name="Strittmatter A.W."/>
            <person name="Streit W.R."/>
        </authorList>
    </citation>
    <scope>NUCLEOTIDE SEQUENCE [LARGE SCALE GENOMIC DNA]</scope>
    <source>
        <strain>NBRC 101917 / NGR234</strain>
    </source>
</reference>